<reference key="1">
    <citation type="journal article" date="2007" name="Mol. Biol. Evol.">
        <title>Gene relocations within chloroplast genomes of Jasminum and Menodora (Oleaceae) are due to multiple, overlapping inversions.</title>
        <authorList>
            <person name="Lee H.-L."/>
            <person name="Jansen R.K."/>
            <person name="Chumley T.W."/>
            <person name="Kim K.-J."/>
        </authorList>
    </citation>
    <scope>NUCLEOTIDE SEQUENCE [LARGE SCALE GENOMIC DNA]</scope>
</reference>
<comment type="function">
    <text evidence="1">This b-type cytochrome is tightly associated with the reaction center of photosystem II (PSII). PSII is a light-driven water:plastoquinone oxidoreductase that uses light energy to abstract electrons from H(2)O, generating O(2) and a proton gradient subsequently used for ATP formation. It consists of a core antenna complex that captures photons, and an electron transfer chain that converts photonic excitation into a charge separation.</text>
</comment>
<comment type="cofactor">
    <cofactor evidence="1">
        <name>heme b</name>
        <dbReference type="ChEBI" id="CHEBI:60344"/>
    </cofactor>
    <text evidence="1">With its partner (PsbF) binds heme. PSII binds additional chlorophylls, carotenoids and specific lipids.</text>
</comment>
<comment type="subunit">
    <text evidence="1">Heterodimer of an alpha subunit and a beta subunit. PSII is composed of 1 copy each of membrane proteins PsbA, PsbB, PsbC, PsbD, PsbE, PsbF, PsbH, PsbI, PsbJ, PsbK, PsbL, PsbM, PsbT, PsbX, PsbY, PsbZ, Psb30/Ycf12, at least 3 peripheral proteins of the oxygen-evolving complex and a large number of cofactors. It forms dimeric complexes.</text>
</comment>
<comment type="subcellular location">
    <subcellularLocation>
        <location evidence="1">Plastid</location>
        <location evidence="1">Chloroplast thylakoid membrane</location>
        <topology evidence="1">Single-pass membrane protein</topology>
    </subcellularLocation>
</comment>
<comment type="similarity">
    <text evidence="1">Belongs to the PsbE/PsbF family.</text>
</comment>
<evidence type="ECO:0000255" key="1">
    <source>
        <dbReference type="HAMAP-Rule" id="MF_00642"/>
    </source>
</evidence>
<protein>
    <recommendedName>
        <fullName evidence="1">Cytochrome b559 subunit alpha</fullName>
    </recommendedName>
    <alternativeName>
        <fullName evidence="1">PSII reaction center subunit V</fullName>
    </alternativeName>
</protein>
<name>PSBE_JASNU</name>
<keyword id="KW-0150">Chloroplast</keyword>
<keyword id="KW-0249">Electron transport</keyword>
<keyword id="KW-0349">Heme</keyword>
<keyword id="KW-0408">Iron</keyword>
<keyword id="KW-0472">Membrane</keyword>
<keyword id="KW-0479">Metal-binding</keyword>
<keyword id="KW-0602">Photosynthesis</keyword>
<keyword id="KW-0604">Photosystem II</keyword>
<keyword id="KW-0934">Plastid</keyword>
<keyword id="KW-0793">Thylakoid</keyword>
<keyword id="KW-0812">Transmembrane</keyword>
<keyword id="KW-1133">Transmembrane helix</keyword>
<keyword id="KW-0813">Transport</keyword>
<accession>Q06RB5</accession>
<dbReference type="EMBL" id="DQ673255">
    <property type="protein sequence ID" value="ABG74644.1"/>
    <property type="molecule type" value="Genomic_DNA"/>
</dbReference>
<dbReference type="RefSeq" id="YP_778506.1">
    <property type="nucleotide sequence ID" value="NC_008407.1"/>
</dbReference>
<dbReference type="SMR" id="Q06RB5"/>
<dbReference type="GeneID" id="4319775"/>
<dbReference type="GO" id="GO:0009535">
    <property type="term" value="C:chloroplast thylakoid membrane"/>
    <property type="evidence" value="ECO:0007669"/>
    <property type="project" value="UniProtKB-SubCell"/>
</dbReference>
<dbReference type="GO" id="GO:0009539">
    <property type="term" value="C:photosystem II reaction center"/>
    <property type="evidence" value="ECO:0007669"/>
    <property type="project" value="InterPro"/>
</dbReference>
<dbReference type="GO" id="GO:0009055">
    <property type="term" value="F:electron transfer activity"/>
    <property type="evidence" value="ECO:0007669"/>
    <property type="project" value="UniProtKB-UniRule"/>
</dbReference>
<dbReference type="GO" id="GO:0020037">
    <property type="term" value="F:heme binding"/>
    <property type="evidence" value="ECO:0007669"/>
    <property type="project" value="InterPro"/>
</dbReference>
<dbReference type="GO" id="GO:0005506">
    <property type="term" value="F:iron ion binding"/>
    <property type="evidence" value="ECO:0007669"/>
    <property type="project" value="UniProtKB-UniRule"/>
</dbReference>
<dbReference type="GO" id="GO:0009767">
    <property type="term" value="P:photosynthetic electron transport chain"/>
    <property type="evidence" value="ECO:0007669"/>
    <property type="project" value="InterPro"/>
</dbReference>
<dbReference type="Gene3D" id="1.20.5.860">
    <property type="entry name" value="Photosystem II cytochrome b559, alpha subunit"/>
    <property type="match status" value="1"/>
</dbReference>
<dbReference type="HAMAP" id="MF_00642">
    <property type="entry name" value="PSII_PsbE"/>
    <property type="match status" value="1"/>
</dbReference>
<dbReference type="InterPro" id="IPR006217">
    <property type="entry name" value="PSII_cyt_b559_asu"/>
</dbReference>
<dbReference type="InterPro" id="IPR037025">
    <property type="entry name" value="PSII_cyt_b559_asu_sf"/>
</dbReference>
<dbReference type="InterPro" id="IPR006216">
    <property type="entry name" value="PSII_cyt_b559_CS"/>
</dbReference>
<dbReference type="InterPro" id="IPR013081">
    <property type="entry name" value="PSII_cyt_b559_N"/>
</dbReference>
<dbReference type="InterPro" id="IPR013082">
    <property type="entry name" value="PSII_cytb559_asu_lum"/>
</dbReference>
<dbReference type="NCBIfam" id="TIGR01332">
    <property type="entry name" value="cyt_b559_alpha"/>
    <property type="match status" value="1"/>
</dbReference>
<dbReference type="PANTHER" id="PTHR33391">
    <property type="entry name" value="CYTOCHROME B559 SUBUNIT BETA-RELATED"/>
    <property type="match status" value="1"/>
</dbReference>
<dbReference type="PANTHER" id="PTHR33391:SF9">
    <property type="entry name" value="CYTOCHROME B559 SUBUNIT BETA-RELATED"/>
    <property type="match status" value="1"/>
</dbReference>
<dbReference type="Pfam" id="PF00283">
    <property type="entry name" value="Cytochrom_B559"/>
    <property type="match status" value="1"/>
</dbReference>
<dbReference type="Pfam" id="PF00284">
    <property type="entry name" value="Cytochrom_B559a"/>
    <property type="match status" value="1"/>
</dbReference>
<dbReference type="PIRSF" id="PIRSF000036">
    <property type="entry name" value="PsbE"/>
    <property type="match status" value="1"/>
</dbReference>
<dbReference type="SUPFAM" id="SSF161045">
    <property type="entry name" value="Cytochrome b559 subunits"/>
    <property type="match status" value="1"/>
</dbReference>
<dbReference type="PROSITE" id="PS00537">
    <property type="entry name" value="CYTOCHROME_B559"/>
    <property type="match status" value="1"/>
</dbReference>
<geneLocation type="chloroplast"/>
<sequence>MSGSTGERSFADIITSIRYWVIHSITIPSLFIAGWLFVSTGLAYDVFGSPRPNEYFTESRQGIPLITGRFDPLEQLDEFSRSF</sequence>
<feature type="chain" id="PRO_0000275709" description="Cytochrome b559 subunit alpha">
    <location>
        <begin position="1"/>
        <end position="83"/>
    </location>
</feature>
<feature type="transmembrane region" description="Helical" evidence="1">
    <location>
        <begin position="21"/>
        <end position="35"/>
    </location>
</feature>
<feature type="binding site" description="axial binding residue" evidence="1">
    <location>
        <position position="23"/>
    </location>
    <ligand>
        <name>heme</name>
        <dbReference type="ChEBI" id="CHEBI:30413"/>
        <note>ligand shared with beta subunit</note>
    </ligand>
    <ligandPart>
        <name>Fe</name>
        <dbReference type="ChEBI" id="CHEBI:18248"/>
    </ligandPart>
</feature>
<organism>
    <name type="scientific">Jasminum nudiflorum</name>
    <name type="common">Winter jasmine</name>
    <dbReference type="NCBI Taxonomy" id="126431"/>
    <lineage>
        <taxon>Eukaryota</taxon>
        <taxon>Viridiplantae</taxon>
        <taxon>Streptophyta</taxon>
        <taxon>Embryophyta</taxon>
        <taxon>Tracheophyta</taxon>
        <taxon>Spermatophyta</taxon>
        <taxon>Magnoliopsida</taxon>
        <taxon>eudicotyledons</taxon>
        <taxon>Gunneridae</taxon>
        <taxon>Pentapetalae</taxon>
        <taxon>asterids</taxon>
        <taxon>lamiids</taxon>
        <taxon>Lamiales</taxon>
        <taxon>Oleaceae</taxon>
        <taxon>Jasmineae</taxon>
        <taxon>Jasminum</taxon>
    </lineage>
</organism>
<gene>
    <name evidence="1" type="primary">psbE</name>
    <name type="ORF">JNC0702</name>
</gene>
<proteinExistence type="inferred from homology"/>